<feature type="chain" id="PRO_0000388968" description="Uncharacterized zinc protease YmfH">
    <location>
        <begin position="1"/>
        <end position="428"/>
    </location>
</feature>
<feature type="active site" description="Proton acceptor" evidence="1">
    <location>
        <position position="71"/>
    </location>
</feature>
<feature type="binding site" evidence="1">
    <location>
        <position position="68"/>
    </location>
    <ligand>
        <name>Zn(2+)</name>
        <dbReference type="ChEBI" id="CHEBI:29105"/>
    </ligand>
</feature>
<feature type="binding site" evidence="1">
    <location>
        <position position="72"/>
    </location>
    <ligand>
        <name>Zn(2+)</name>
        <dbReference type="ChEBI" id="CHEBI:29105"/>
    </ligand>
</feature>
<feature type="binding site" evidence="1">
    <location>
        <position position="143"/>
    </location>
    <ligand>
        <name>Zn(2+)</name>
        <dbReference type="ChEBI" id="CHEBI:29105"/>
    </ligand>
</feature>
<accession>O31766</accession>
<proteinExistence type="inferred from homology"/>
<reference key="1">
    <citation type="journal article" date="1997" name="Nature">
        <title>The complete genome sequence of the Gram-positive bacterium Bacillus subtilis.</title>
        <authorList>
            <person name="Kunst F."/>
            <person name="Ogasawara N."/>
            <person name="Moszer I."/>
            <person name="Albertini A.M."/>
            <person name="Alloni G."/>
            <person name="Azevedo V."/>
            <person name="Bertero M.G."/>
            <person name="Bessieres P."/>
            <person name="Bolotin A."/>
            <person name="Borchert S."/>
            <person name="Borriss R."/>
            <person name="Boursier L."/>
            <person name="Brans A."/>
            <person name="Braun M."/>
            <person name="Brignell S.C."/>
            <person name="Bron S."/>
            <person name="Brouillet S."/>
            <person name="Bruschi C.V."/>
            <person name="Caldwell B."/>
            <person name="Capuano V."/>
            <person name="Carter N.M."/>
            <person name="Choi S.-K."/>
            <person name="Codani J.-J."/>
            <person name="Connerton I.F."/>
            <person name="Cummings N.J."/>
            <person name="Daniel R.A."/>
            <person name="Denizot F."/>
            <person name="Devine K.M."/>
            <person name="Duesterhoeft A."/>
            <person name="Ehrlich S.D."/>
            <person name="Emmerson P.T."/>
            <person name="Entian K.-D."/>
            <person name="Errington J."/>
            <person name="Fabret C."/>
            <person name="Ferrari E."/>
            <person name="Foulger D."/>
            <person name="Fritz C."/>
            <person name="Fujita M."/>
            <person name="Fujita Y."/>
            <person name="Fuma S."/>
            <person name="Galizzi A."/>
            <person name="Galleron N."/>
            <person name="Ghim S.-Y."/>
            <person name="Glaser P."/>
            <person name="Goffeau A."/>
            <person name="Golightly E.J."/>
            <person name="Grandi G."/>
            <person name="Guiseppi G."/>
            <person name="Guy B.J."/>
            <person name="Haga K."/>
            <person name="Haiech J."/>
            <person name="Harwood C.R."/>
            <person name="Henaut A."/>
            <person name="Hilbert H."/>
            <person name="Holsappel S."/>
            <person name="Hosono S."/>
            <person name="Hullo M.-F."/>
            <person name="Itaya M."/>
            <person name="Jones L.-M."/>
            <person name="Joris B."/>
            <person name="Karamata D."/>
            <person name="Kasahara Y."/>
            <person name="Klaerr-Blanchard M."/>
            <person name="Klein C."/>
            <person name="Kobayashi Y."/>
            <person name="Koetter P."/>
            <person name="Koningstein G."/>
            <person name="Krogh S."/>
            <person name="Kumano M."/>
            <person name="Kurita K."/>
            <person name="Lapidus A."/>
            <person name="Lardinois S."/>
            <person name="Lauber J."/>
            <person name="Lazarevic V."/>
            <person name="Lee S.-M."/>
            <person name="Levine A."/>
            <person name="Liu H."/>
            <person name="Masuda S."/>
            <person name="Mauel C."/>
            <person name="Medigue C."/>
            <person name="Medina N."/>
            <person name="Mellado R.P."/>
            <person name="Mizuno M."/>
            <person name="Moestl D."/>
            <person name="Nakai S."/>
            <person name="Noback M."/>
            <person name="Noone D."/>
            <person name="O'Reilly M."/>
            <person name="Ogawa K."/>
            <person name="Ogiwara A."/>
            <person name="Oudega B."/>
            <person name="Park S.-H."/>
            <person name="Parro V."/>
            <person name="Pohl T.M."/>
            <person name="Portetelle D."/>
            <person name="Porwollik S."/>
            <person name="Prescott A.M."/>
            <person name="Presecan E."/>
            <person name="Pujic P."/>
            <person name="Purnelle B."/>
            <person name="Rapoport G."/>
            <person name="Rey M."/>
            <person name="Reynolds S."/>
            <person name="Rieger M."/>
            <person name="Rivolta C."/>
            <person name="Rocha E."/>
            <person name="Roche B."/>
            <person name="Rose M."/>
            <person name="Sadaie Y."/>
            <person name="Sato T."/>
            <person name="Scanlan E."/>
            <person name="Schleich S."/>
            <person name="Schroeter R."/>
            <person name="Scoffone F."/>
            <person name="Sekiguchi J."/>
            <person name="Sekowska A."/>
            <person name="Seror S.J."/>
            <person name="Serror P."/>
            <person name="Shin B.-S."/>
            <person name="Soldo B."/>
            <person name="Sorokin A."/>
            <person name="Tacconi E."/>
            <person name="Takagi T."/>
            <person name="Takahashi H."/>
            <person name="Takemaru K."/>
            <person name="Takeuchi M."/>
            <person name="Tamakoshi A."/>
            <person name="Tanaka T."/>
            <person name="Terpstra P."/>
            <person name="Tognoni A."/>
            <person name="Tosato V."/>
            <person name="Uchiyama S."/>
            <person name="Vandenbol M."/>
            <person name="Vannier F."/>
            <person name="Vassarotti A."/>
            <person name="Viari A."/>
            <person name="Wambutt R."/>
            <person name="Wedler E."/>
            <person name="Wedler H."/>
            <person name="Weitzenegger T."/>
            <person name="Winters P."/>
            <person name="Wipat A."/>
            <person name="Yamamoto H."/>
            <person name="Yamane K."/>
            <person name="Yasumoto K."/>
            <person name="Yata K."/>
            <person name="Yoshida K."/>
            <person name="Yoshikawa H.-F."/>
            <person name="Zumstein E."/>
            <person name="Yoshikawa H."/>
            <person name="Danchin A."/>
        </authorList>
    </citation>
    <scope>NUCLEOTIDE SEQUENCE [LARGE SCALE GENOMIC DNA]</scope>
    <source>
        <strain>168</strain>
    </source>
</reference>
<reference key="2">
    <citation type="journal article" date="2009" name="Microbiology">
        <title>From a consortium sequence to a unified sequence: the Bacillus subtilis 168 reference genome a decade later.</title>
        <authorList>
            <person name="Barbe V."/>
            <person name="Cruveiller S."/>
            <person name="Kunst F."/>
            <person name="Lenoble P."/>
            <person name="Meurice G."/>
            <person name="Sekowska A."/>
            <person name="Vallenet D."/>
            <person name="Wang T."/>
            <person name="Moszer I."/>
            <person name="Medigue C."/>
            <person name="Danchin A."/>
        </authorList>
    </citation>
    <scope>SEQUENCE REVISION TO N-TERMINUS</scope>
</reference>
<protein>
    <recommendedName>
        <fullName>Uncharacterized zinc protease YmfH</fullName>
        <ecNumber>3.4.24.-</ecNumber>
    </recommendedName>
</protein>
<name>YMFH_BACSU</name>
<comment type="cofactor">
    <cofactor evidence="1">
        <name>Zn(2+)</name>
        <dbReference type="ChEBI" id="CHEBI:29105"/>
    </cofactor>
    <text evidence="1">Binds 1 zinc ion per subunit.</text>
</comment>
<comment type="similarity">
    <text evidence="2">Belongs to the peptidase M16 family.</text>
</comment>
<sequence length="428" mass="48949">MIKPIEYEQLQETLYHEKMSNGLDVYVLPKKGFNKTYAVFTTKYGSIDNRFVPLGKNEMVHVPDGIAHFLEHKLFEKADGDVFQDFSKQGASANAFTSFTRTAYLFSSTSNVERNLETLIDFVQDPYFTEKTVEKEKGIIGQEINMYDDNPDWRLYFGVIENMYKEHPVRIDIAGTVESISHITKDLLYECYETFYHPSNMLLFIVGPVDPEAIISQVRENQGKKPYTDQPEIKREEVKEQEAVFRKEKEIKMNVQGPKCLVGLKSKNPFKLGKELLKHELSMNLLLEALFGKSSAQYESLYEKGYIDETFSFDFTAEYGFGFAAIGGDTPEPDQLAEDISSMLLRAGELITAEKIELARKKKIGTFLKALNSPEYIANQFTRYAFLDMSLFDVVTVLEQITLEDVQNVIQEEIAADRLTVCKVVPKS</sequence>
<organism>
    <name type="scientific">Bacillus subtilis (strain 168)</name>
    <dbReference type="NCBI Taxonomy" id="224308"/>
    <lineage>
        <taxon>Bacteria</taxon>
        <taxon>Bacillati</taxon>
        <taxon>Bacillota</taxon>
        <taxon>Bacilli</taxon>
        <taxon>Bacillales</taxon>
        <taxon>Bacillaceae</taxon>
        <taxon>Bacillus</taxon>
    </lineage>
</organism>
<dbReference type="EC" id="3.4.24.-"/>
<dbReference type="EMBL" id="AL009126">
    <property type="protein sequence ID" value="CAB13559.2"/>
    <property type="molecule type" value="Genomic_DNA"/>
</dbReference>
<dbReference type="RefSeq" id="NP_389568.2">
    <property type="nucleotide sequence ID" value="NC_000964.3"/>
</dbReference>
<dbReference type="SMR" id="O31766"/>
<dbReference type="FunCoup" id="O31766">
    <property type="interactions" value="11"/>
</dbReference>
<dbReference type="STRING" id="224308.BSU16860"/>
<dbReference type="MEROPS" id="M16.A20"/>
<dbReference type="jPOST" id="O31766"/>
<dbReference type="PaxDb" id="224308-BSU16860"/>
<dbReference type="EnsemblBacteria" id="CAB13559">
    <property type="protein sequence ID" value="CAB13559"/>
    <property type="gene ID" value="BSU_16860"/>
</dbReference>
<dbReference type="GeneID" id="939665"/>
<dbReference type="KEGG" id="bsu:BSU16860"/>
<dbReference type="PATRIC" id="fig|224308.179.peg.1827"/>
<dbReference type="eggNOG" id="COG0612">
    <property type="taxonomic scope" value="Bacteria"/>
</dbReference>
<dbReference type="InParanoid" id="O31766"/>
<dbReference type="OrthoDB" id="9811314at2"/>
<dbReference type="PhylomeDB" id="O31766"/>
<dbReference type="BioCyc" id="BSUB:BSU16860-MONOMER"/>
<dbReference type="Proteomes" id="UP000001570">
    <property type="component" value="Chromosome"/>
</dbReference>
<dbReference type="GO" id="GO:0046872">
    <property type="term" value="F:metal ion binding"/>
    <property type="evidence" value="ECO:0007669"/>
    <property type="project" value="UniProtKB-KW"/>
</dbReference>
<dbReference type="GO" id="GO:0008237">
    <property type="term" value="F:metallopeptidase activity"/>
    <property type="evidence" value="ECO:0007669"/>
    <property type="project" value="UniProtKB-KW"/>
</dbReference>
<dbReference type="GO" id="GO:0006508">
    <property type="term" value="P:proteolysis"/>
    <property type="evidence" value="ECO:0007669"/>
    <property type="project" value="UniProtKB-KW"/>
</dbReference>
<dbReference type="Gene3D" id="3.30.830.10">
    <property type="entry name" value="Metalloenzyme, LuxS/M16 peptidase-like"/>
    <property type="match status" value="2"/>
</dbReference>
<dbReference type="InterPro" id="IPR011249">
    <property type="entry name" value="Metalloenz_LuxS/M16"/>
</dbReference>
<dbReference type="InterPro" id="IPR050361">
    <property type="entry name" value="MPP/UQCRC_Complex"/>
</dbReference>
<dbReference type="InterPro" id="IPR011765">
    <property type="entry name" value="Pept_M16_N"/>
</dbReference>
<dbReference type="InterPro" id="IPR007863">
    <property type="entry name" value="Peptidase_M16_C"/>
</dbReference>
<dbReference type="NCBIfam" id="NF047421">
    <property type="entry name" value="YfmH_fam"/>
    <property type="match status" value="1"/>
</dbReference>
<dbReference type="PANTHER" id="PTHR11851">
    <property type="entry name" value="METALLOPROTEASE"/>
    <property type="match status" value="1"/>
</dbReference>
<dbReference type="PANTHER" id="PTHR11851:SF134">
    <property type="entry name" value="ZINC-DEPENDENT PROTEASE"/>
    <property type="match status" value="1"/>
</dbReference>
<dbReference type="Pfam" id="PF00675">
    <property type="entry name" value="Peptidase_M16"/>
    <property type="match status" value="1"/>
</dbReference>
<dbReference type="Pfam" id="PF05193">
    <property type="entry name" value="Peptidase_M16_C"/>
    <property type="match status" value="1"/>
</dbReference>
<dbReference type="SUPFAM" id="SSF63411">
    <property type="entry name" value="LuxS/MPP-like metallohydrolase"/>
    <property type="match status" value="2"/>
</dbReference>
<evidence type="ECO:0000250" key="1"/>
<evidence type="ECO:0000305" key="2"/>
<keyword id="KW-0378">Hydrolase</keyword>
<keyword id="KW-0479">Metal-binding</keyword>
<keyword id="KW-0482">Metalloprotease</keyword>
<keyword id="KW-0645">Protease</keyword>
<keyword id="KW-1185">Reference proteome</keyword>
<keyword id="KW-0862">Zinc</keyword>
<gene>
    <name type="primary">ymfH</name>
    <name type="ordered locus">BSU16860</name>
</gene>